<sequence>MTITPPPSDTEVSVLENKNLGRITQIIGPVLDVVFPPGKMPYIYNALIVQGRDTVGKQINVTCEVQQLLGNNRIRAVAMSATDGLKRGMEVIDTGAALSVPVGGATLGRIFNVLGEPIDNLGPVDTRTTSPIHRSAPAFIQLDTQLSIFETGIKVVDLLAPYRRGGKIGLFGGAGVGKTVLIMELINNIAKAHGGVSVFGGVGERTREGNDLYMEMKESRVINEKNIAESKVALVYGQMNEPPGARMRVGLTALTMAEYFRDVNEQDVLLFIDNIFRFVQAGSEVSALLGRMPSAVGYQPTLGTEMGTLQERITSTKEGSITSIQAVYVPADDLTDPAPATTFAHLDATTVLSRGLAAKGIYPAVDPLDSTSTMLQPRIVGEEHYETAQRVKQTLQRYKELQDMIAILGLDEVSEEDRLTVARARKIERFFSQPFFVAEVFTGSPGKYVGLAETIRGFQLILSGELDSLPEQAFYLVGNIDEATAKATNLT</sequence>
<accession>P05037</accession>
<keyword id="KW-0066">ATP synthesis</keyword>
<keyword id="KW-0067">ATP-binding</keyword>
<keyword id="KW-0139">CF(1)</keyword>
<keyword id="KW-0150">Chloroplast</keyword>
<keyword id="KW-0375">Hydrogen ion transport</keyword>
<keyword id="KW-0406">Ion transport</keyword>
<keyword id="KW-0472">Membrane</keyword>
<keyword id="KW-0547">Nucleotide-binding</keyword>
<keyword id="KW-0934">Plastid</keyword>
<keyword id="KW-0793">Thylakoid</keyword>
<keyword id="KW-1278">Translocase</keyword>
<keyword id="KW-0813">Transport</keyword>
<feature type="chain" id="PRO_0000144539" description="ATP synthase subunit beta, chloroplastic">
    <location>
        <begin position="1"/>
        <end position="491"/>
    </location>
</feature>
<feature type="binding site" evidence="1">
    <location>
        <begin position="172"/>
        <end position="179"/>
    </location>
    <ligand>
        <name>ATP</name>
        <dbReference type="ChEBI" id="CHEBI:30616"/>
    </ligand>
</feature>
<protein>
    <recommendedName>
        <fullName evidence="1">ATP synthase subunit beta, chloroplastic</fullName>
        <ecNumber evidence="1">7.1.2.2</ecNumber>
    </recommendedName>
    <alternativeName>
        <fullName evidence="1">ATP synthase F1 sector subunit beta</fullName>
    </alternativeName>
    <alternativeName>
        <fullName evidence="1">F-ATPase subunit beta</fullName>
    </alternativeName>
</protein>
<organism>
    <name type="scientific">Pisum sativum</name>
    <name type="common">Garden pea</name>
    <name type="synonym">Lathyrus oleraceus</name>
    <dbReference type="NCBI Taxonomy" id="3888"/>
    <lineage>
        <taxon>Eukaryota</taxon>
        <taxon>Viridiplantae</taxon>
        <taxon>Streptophyta</taxon>
        <taxon>Embryophyta</taxon>
        <taxon>Tracheophyta</taxon>
        <taxon>Spermatophyta</taxon>
        <taxon>Magnoliopsida</taxon>
        <taxon>eudicotyledons</taxon>
        <taxon>Gunneridae</taxon>
        <taxon>Pentapetalae</taxon>
        <taxon>rosids</taxon>
        <taxon>fabids</taxon>
        <taxon>Fabales</taxon>
        <taxon>Fabaceae</taxon>
        <taxon>Papilionoideae</taxon>
        <taxon>50 kb inversion clade</taxon>
        <taxon>NPAAA clade</taxon>
        <taxon>Hologalegina</taxon>
        <taxon>IRL clade</taxon>
        <taxon>Fabeae</taxon>
        <taxon>Pisum</taxon>
    </lineage>
</organism>
<name>ATPB_PEA</name>
<gene>
    <name evidence="1" type="primary">atpB</name>
</gene>
<geneLocation type="chloroplast"/>
<reference key="1">
    <citation type="journal article" date="1986" name="Nucleic Acids Res.">
        <title>Sequence of the genes for the beta and epsilon subunits of ATP synthase from pea chloroplasts.</title>
        <authorList>
            <person name="Zurawski G."/>
            <person name="Bottomley W."/>
            <person name="Whitfeld P.R."/>
        </authorList>
    </citation>
    <scope>NUCLEOTIDE SEQUENCE [GENOMIC DNA]</scope>
</reference>
<comment type="function">
    <text evidence="1">Produces ATP from ADP in the presence of a proton gradient across the membrane. The catalytic sites are hosted primarily by the beta subunits.</text>
</comment>
<comment type="catalytic activity">
    <reaction evidence="1">
        <text>ATP + H2O + 4 H(+)(in) = ADP + phosphate + 5 H(+)(out)</text>
        <dbReference type="Rhea" id="RHEA:57720"/>
        <dbReference type="ChEBI" id="CHEBI:15377"/>
        <dbReference type="ChEBI" id="CHEBI:15378"/>
        <dbReference type="ChEBI" id="CHEBI:30616"/>
        <dbReference type="ChEBI" id="CHEBI:43474"/>
        <dbReference type="ChEBI" id="CHEBI:456216"/>
        <dbReference type="EC" id="7.1.2.2"/>
    </reaction>
</comment>
<comment type="subunit">
    <text evidence="1">F-type ATPases have 2 components, CF(1) - the catalytic core - and CF(0) - the membrane proton channel. CF(1) has five subunits: alpha(3), beta(3), gamma(1), delta(1), epsilon(1). CF(0) has four main subunits: a(1), b(1), b'(1) and c(9-12).</text>
</comment>
<comment type="subcellular location">
    <subcellularLocation>
        <location evidence="1">Plastid</location>
        <location evidence="1">Chloroplast thylakoid membrane</location>
        <topology evidence="1">Peripheral membrane protein</topology>
    </subcellularLocation>
</comment>
<comment type="similarity">
    <text evidence="1">Belongs to the ATPase alpha/beta chains family.</text>
</comment>
<proteinExistence type="inferred from homology"/>
<dbReference type="EC" id="7.1.2.2" evidence="1"/>
<dbReference type="EMBL" id="X03852">
    <property type="protein sequence ID" value="CAA27481.1"/>
    <property type="molecule type" value="Genomic_DNA"/>
</dbReference>
<dbReference type="PIR" id="A24467">
    <property type="entry name" value="A24467"/>
</dbReference>
<dbReference type="RefSeq" id="YP_003587525.1">
    <property type="nucleotide sequence ID" value="NC_014057.1"/>
</dbReference>
<dbReference type="SMR" id="P05037"/>
<dbReference type="GeneID" id="9073050"/>
<dbReference type="GO" id="GO:0009535">
    <property type="term" value="C:chloroplast thylakoid membrane"/>
    <property type="evidence" value="ECO:0007669"/>
    <property type="project" value="UniProtKB-SubCell"/>
</dbReference>
<dbReference type="GO" id="GO:0005739">
    <property type="term" value="C:mitochondrion"/>
    <property type="evidence" value="ECO:0007669"/>
    <property type="project" value="GOC"/>
</dbReference>
<dbReference type="GO" id="GO:0045259">
    <property type="term" value="C:proton-transporting ATP synthase complex"/>
    <property type="evidence" value="ECO:0007669"/>
    <property type="project" value="UniProtKB-KW"/>
</dbReference>
<dbReference type="GO" id="GO:0005524">
    <property type="term" value="F:ATP binding"/>
    <property type="evidence" value="ECO:0007669"/>
    <property type="project" value="UniProtKB-UniRule"/>
</dbReference>
<dbReference type="GO" id="GO:0016887">
    <property type="term" value="F:ATP hydrolysis activity"/>
    <property type="evidence" value="ECO:0007669"/>
    <property type="project" value="InterPro"/>
</dbReference>
<dbReference type="GO" id="GO:0046933">
    <property type="term" value="F:proton-transporting ATP synthase activity, rotational mechanism"/>
    <property type="evidence" value="ECO:0007669"/>
    <property type="project" value="UniProtKB-UniRule"/>
</dbReference>
<dbReference type="GO" id="GO:0042776">
    <property type="term" value="P:proton motive force-driven mitochondrial ATP synthesis"/>
    <property type="evidence" value="ECO:0007669"/>
    <property type="project" value="TreeGrafter"/>
</dbReference>
<dbReference type="CDD" id="cd18110">
    <property type="entry name" value="ATP-synt_F1_beta_C"/>
    <property type="match status" value="1"/>
</dbReference>
<dbReference type="CDD" id="cd18115">
    <property type="entry name" value="ATP-synt_F1_beta_N"/>
    <property type="match status" value="1"/>
</dbReference>
<dbReference type="CDD" id="cd01133">
    <property type="entry name" value="F1-ATPase_beta_CD"/>
    <property type="match status" value="1"/>
</dbReference>
<dbReference type="FunFam" id="1.10.1140.10:FF:000001">
    <property type="entry name" value="ATP synthase subunit beta"/>
    <property type="match status" value="1"/>
</dbReference>
<dbReference type="FunFam" id="3.40.50.12240:FF:000006">
    <property type="entry name" value="ATP synthase subunit beta"/>
    <property type="match status" value="1"/>
</dbReference>
<dbReference type="FunFam" id="3.40.50.300:FF:000004">
    <property type="entry name" value="ATP synthase subunit beta"/>
    <property type="match status" value="1"/>
</dbReference>
<dbReference type="FunFam" id="2.40.10.170:FF:000002">
    <property type="entry name" value="ATP synthase subunit beta, chloroplastic"/>
    <property type="match status" value="1"/>
</dbReference>
<dbReference type="Gene3D" id="2.40.10.170">
    <property type="match status" value="1"/>
</dbReference>
<dbReference type="Gene3D" id="1.10.1140.10">
    <property type="entry name" value="Bovine Mitochondrial F1-atpase, Atp Synthase Beta Chain, Chain D, domain 3"/>
    <property type="match status" value="1"/>
</dbReference>
<dbReference type="Gene3D" id="3.40.50.300">
    <property type="entry name" value="P-loop containing nucleotide triphosphate hydrolases"/>
    <property type="match status" value="1"/>
</dbReference>
<dbReference type="HAMAP" id="MF_01347">
    <property type="entry name" value="ATP_synth_beta_bact"/>
    <property type="match status" value="1"/>
</dbReference>
<dbReference type="InterPro" id="IPR003593">
    <property type="entry name" value="AAA+_ATPase"/>
</dbReference>
<dbReference type="InterPro" id="IPR055190">
    <property type="entry name" value="ATP-synt_VA_C"/>
</dbReference>
<dbReference type="InterPro" id="IPR005722">
    <property type="entry name" value="ATP_synth_F1_bsu"/>
</dbReference>
<dbReference type="InterPro" id="IPR020003">
    <property type="entry name" value="ATPase_a/bsu_AS"/>
</dbReference>
<dbReference type="InterPro" id="IPR050053">
    <property type="entry name" value="ATPase_alpha/beta_chains"/>
</dbReference>
<dbReference type="InterPro" id="IPR004100">
    <property type="entry name" value="ATPase_F1/V1/A1_a/bsu_N"/>
</dbReference>
<dbReference type="InterPro" id="IPR036121">
    <property type="entry name" value="ATPase_F1/V1/A1_a/bsu_N_sf"/>
</dbReference>
<dbReference type="InterPro" id="IPR000194">
    <property type="entry name" value="ATPase_F1/V1/A1_a/bsu_nucl-bd"/>
</dbReference>
<dbReference type="InterPro" id="IPR024034">
    <property type="entry name" value="ATPase_F1/V1_b/a_C"/>
</dbReference>
<dbReference type="InterPro" id="IPR027417">
    <property type="entry name" value="P-loop_NTPase"/>
</dbReference>
<dbReference type="NCBIfam" id="TIGR01039">
    <property type="entry name" value="atpD"/>
    <property type="match status" value="1"/>
</dbReference>
<dbReference type="PANTHER" id="PTHR15184">
    <property type="entry name" value="ATP SYNTHASE"/>
    <property type="match status" value="1"/>
</dbReference>
<dbReference type="PANTHER" id="PTHR15184:SF71">
    <property type="entry name" value="ATP SYNTHASE SUBUNIT BETA, MITOCHONDRIAL"/>
    <property type="match status" value="1"/>
</dbReference>
<dbReference type="Pfam" id="PF00006">
    <property type="entry name" value="ATP-synt_ab"/>
    <property type="match status" value="1"/>
</dbReference>
<dbReference type="Pfam" id="PF02874">
    <property type="entry name" value="ATP-synt_ab_N"/>
    <property type="match status" value="1"/>
</dbReference>
<dbReference type="Pfam" id="PF22919">
    <property type="entry name" value="ATP-synt_VA_C"/>
    <property type="match status" value="1"/>
</dbReference>
<dbReference type="SMART" id="SM00382">
    <property type="entry name" value="AAA"/>
    <property type="match status" value="1"/>
</dbReference>
<dbReference type="SUPFAM" id="SSF47917">
    <property type="entry name" value="C-terminal domain of alpha and beta subunits of F1 ATP synthase"/>
    <property type="match status" value="1"/>
</dbReference>
<dbReference type="SUPFAM" id="SSF50615">
    <property type="entry name" value="N-terminal domain of alpha and beta subunits of F1 ATP synthase"/>
    <property type="match status" value="1"/>
</dbReference>
<dbReference type="SUPFAM" id="SSF52540">
    <property type="entry name" value="P-loop containing nucleoside triphosphate hydrolases"/>
    <property type="match status" value="1"/>
</dbReference>
<dbReference type="PROSITE" id="PS00152">
    <property type="entry name" value="ATPASE_ALPHA_BETA"/>
    <property type="match status" value="1"/>
</dbReference>
<evidence type="ECO:0000255" key="1">
    <source>
        <dbReference type="HAMAP-Rule" id="MF_01347"/>
    </source>
</evidence>